<gene>
    <name evidence="1" type="primary">rplB</name>
    <name type="ordered locus">CLL_A0241</name>
</gene>
<reference key="1">
    <citation type="submission" date="2008-04" db="EMBL/GenBank/DDBJ databases">
        <title>Complete sequence of Clostridium botulinum strain Eklund.</title>
        <authorList>
            <person name="Brinkac L.M."/>
            <person name="Brown J.L."/>
            <person name="Bruce D."/>
            <person name="Detter C."/>
            <person name="Munk C."/>
            <person name="Smith L.A."/>
            <person name="Smith T.J."/>
            <person name="Sutton G."/>
            <person name="Brettin T.S."/>
        </authorList>
    </citation>
    <scope>NUCLEOTIDE SEQUENCE [LARGE SCALE GENOMIC DNA]</scope>
    <source>
        <strain>Eklund 17B / Type B</strain>
    </source>
</reference>
<evidence type="ECO:0000255" key="1">
    <source>
        <dbReference type="HAMAP-Rule" id="MF_01320"/>
    </source>
</evidence>
<evidence type="ECO:0000256" key="2">
    <source>
        <dbReference type="SAM" id="MobiDB-lite"/>
    </source>
</evidence>
<evidence type="ECO:0000305" key="3"/>
<sequence length="277" mass="30358">MAVKKFNPITPSRRQMTMPTFEEITSQQPEKSLLVSLKSKAGRNAQGKITVRHRGGGVKRKYRIIDFKRNKDSIPAKVATIEYDPNRSAYIALVVYTDGEKRYIIAPAGLKVGDVIVSGPDSDIKPGNALPLKNIPVGTVIHNIELQKGKGGQLVRSAGNSAQLMAKEGNYATLRLPSGEMRYVRIECRATIGTVSNPTNDIVNIGKAGRKRHMGWRPTVRGSVMNPNDHPHGGGEGKSPVGRPSPVTPWGKPALGYKTRKNKKYSDRFIIKGRNAK</sequence>
<accession>B2TIH8</accession>
<dbReference type="EMBL" id="CP001056">
    <property type="protein sequence ID" value="ACD24700.1"/>
    <property type="molecule type" value="Genomic_DNA"/>
</dbReference>
<dbReference type="SMR" id="B2TIH8"/>
<dbReference type="KEGG" id="cbk:CLL_A0241"/>
<dbReference type="PATRIC" id="fig|935198.13.peg.216"/>
<dbReference type="HOGENOM" id="CLU_036235_2_1_9"/>
<dbReference type="Proteomes" id="UP000001195">
    <property type="component" value="Chromosome"/>
</dbReference>
<dbReference type="GO" id="GO:0015934">
    <property type="term" value="C:large ribosomal subunit"/>
    <property type="evidence" value="ECO:0007669"/>
    <property type="project" value="InterPro"/>
</dbReference>
<dbReference type="GO" id="GO:0019843">
    <property type="term" value="F:rRNA binding"/>
    <property type="evidence" value="ECO:0007669"/>
    <property type="project" value="UniProtKB-UniRule"/>
</dbReference>
<dbReference type="GO" id="GO:0003735">
    <property type="term" value="F:structural constituent of ribosome"/>
    <property type="evidence" value="ECO:0007669"/>
    <property type="project" value="InterPro"/>
</dbReference>
<dbReference type="GO" id="GO:0016740">
    <property type="term" value="F:transferase activity"/>
    <property type="evidence" value="ECO:0007669"/>
    <property type="project" value="InterPro"/>
</dbReference>
<dbReference type="GO" id="GO:0002181">
    <property type="term" value="P:cytoplasmic translation"/>
    <property type="evidence" value="ECO:0007669"/>
    <property type="project" value="TreeGrafter"/>
</dbReference>
<dbReference type="FunFam" id="2.30.30.30:FF:000001">
    <property type="entry name" value="50S ribosomal protein L2"/>
    <property type="match status" value="1"/>
</dbReference>
<dbReference type="FunFam" id="2.40.50.140:FF:000003">
    <property type="entry name" value="50S ribosomal protein L2"/>
    <property type="match status" value="1"/>
</dbReference>
<dbReference type="FunFam" id="4.10.950.10:FF:000001">
    <property type="entry name" value="50S ribosomal protein L2"/>
    <property type="match status" value="1"/>
</dbReference>
<dbReference type="Gene3D" id="2.30.30.30">
    <property type="match status" value="1"/>
</dbReference>
<dbReference type="Gene3D" id="2.40.50.140">
    <property type="entry name" value="Nucleic acid-binding proteins"/>
    <property type="match status" value="1"/>
</dbReference>
<dbReference type="Gene3D" id="4.10.950.10">
    <property type="entry name" value="Ribosomal protein L2, domain 3"/>
    <property type="match status" value="1"/>
</dbReference>
<dbReference type="HAMAP" id="MF_01320_B">
    <property type="entry name" value="Ribosomal_uL2_B"/>
    <property type="match status" value="1"/>
</dbReference>
<dbReference type="InterPro" id="IPR012340">
    <property type="entry name" value="NA-bd_OB-fold"/>
</dbReference>
<dbReference type="InterPro" id="IPR014722">
    <property type="entry name" value="Rib_uL2_dom2"/>
</dbReference>
<dbReference type="InterPro" id="IPR002171">
    <property type="entry name" value="Ribosomal_uL2"/>
</dbReference>
<dbReference type="InterPro" id="IPR005880">
    <property type="entry name" value="Ribosomal_uL2_bac/org-type"/>
</dbReference>
<dbReference type="InterPro" id="IPR022669">
    <property type="entry name" value="Ribosomal_uL2_C"/>
</dbReference>
<dbReference type="InterPro" id="IPR022671">
    <property type="entry name" value="Ribosomal_uL2_CS"/>
</dbReference>
<dbReference type="InterPro" id="IPR014726">
    <property type="entry name" value="Ribosomal_uL2_dom3"/>
</dbReference>
<dbReference type="InterPro" id="IPR022666">
    <property type="entry name" value="Ribosomal_uL2_RNA-bd_dom"/>
</dbReference>
<dbReference type="InterPro" id="IPR008991">
    <property type="entry name" value="Translation_prot_SH3-like_sf"/>
</dbReference>
<dbReference type="NCBIfam" id="TIGR01171">
    <property type="entry name" value="rplB_bact"/>
    <property type="match status" value="1"/>
</dbReference>
<dbReference type="PANTHER" id="PTHR13691:SF5">
    <property type="entry name" value="LARGE RIBOSOMAL SUBUNIT PROTEIN UL2M"/>
    <property type="match status" value="1"/>
</dbReference>
<dbReference type="PANTHER" id="PTHR13691">
    <property type="entry name" value="RIBOSOMAL PROTEIN L2"/>
    <property type="match status" value="1"/>
</dbReference>
<dbReference type="Pfam" id="PF00181">
    <property type="entry name" value="Ribosomal_L2"/>
    <property type="match status" value="1"/>
</dbReference>
<dbReference type="Pfam" id="PF03947">
    <property type="entry name" value="Ribosomal_L2_C"/>
    <property type="match status" value="1"/>
</dbReference>
<dbReference type="PIRSF" id="PIRSF002158">
    <property type="entry name" value="Ribosomal_L2"/>
    <property type="match status" value="1"/>
</dbReference>
<dbReference type="SMART" id="SM01383">
    <property type="entry name" value="Ribosomal_L2"/>
    <property type="match status" value="1"/>
</dbReference>
<dbReference type="SMART" id="SM01382">
    <property type="entry name" value="Ribosomal_L2_C"/>
    <property type="match status" value="1"/>
</dbReference>
<dbReference type="SUPFAM" id="SSF50249">
    <property type="entry name" value="Nucleic acid-binding proteins"/>
    <property type="match status" value="1"/>
</dbReference>
<dbReference type="SUPFAM" id="SSF50104">
    <property type="entry name" value="Translation proteins SH3-like domain"/>
    <property type="match status" value="1"/>
</dbReference>
<dbReference type="PROSITE" id="PS00467">
    <property type="entry name" value="RIBOSOMAL_L2"/>
    <property type="match status" value="1"/>
</dbReference>
<proteinExistence type="inferred from homology"/>
<organism>
    <name type="scientific">Clostridium botulinum (strain Eklund 17B / Type B)</name>
    <dbReference type="NCBI Taxonomy" id="935198"/>
    <lineage>
        <taxon>Bacteria</taxon>
        <taxon>Bacillati</taxon>
        <taxon>Bacillota</taxon>
        <taxon>Clostridia</taxon>
        <taxon>Eubacteriales</taxon>
        <taxon>Clostridiaceae</taxon>
        <taxon>Clostridium</taxon>
    </lineage>
</organism>
<comment type="function">
    <text evidence="1">One of the primary rRNA binding proteins. Required for association of the 30S and 50S subunits to form the 70S ribosome, for tRNA binding and peptide bond formation. It has been suggested to have peptidyltransferase activity; this is somewhat controversial. Makes several contacts with the 16S rRNA in the 70S ribosome.</text>
</comment>
<comment type="subunit">
    <text evidence="1">Part of the 50S ribosomal subunit. Forms a bridge to the 30S subunit in the 70S ribosome.</text>
</comment>
<comment type="similarity">
    <text evidence="1">Belongs to the universal ribosomal protein uL2 family.</text>
</comment>
<feature type="chain" id="PRO_1000141528" description="Large ribosomal subunit protein uL2">
    <location>
        <begin position="1"/>
        <end position="277"/>
    </location>
</feature>
<feature type="region of interest" description="Disordered" evidence="2">
    <location>
        <begin position="223"/>
        <end position="261"/>
    </location>
</feature>
<protein>
    <recommendedName>
        <fullName evidence="1">Large ribosomal subunit protein uL2</fullName>
    </recommendedName>
    <alternativeName>
        <fullName evidence="3">50S ribosomal protein L2</fullName>
    </alternativeName>
</protein>
<name>RL2_CLOBB</name>
<keyword id="KW-0687">Ribonucleoprotein</keyword>
<keyword id="KW-0689">Ribosomal protein</keyword>
<keyword id="KW-0694">RNA-binding</keyword>
<keyword id="KW-0699">rRNA-binding</keyword>